<gene>
    <name type="primary">argS</name>
    <name type="ordered locus">Rv1292</name>
    <name type="ORF">MTCY373.12</name>
</gene>
<evidence type="ECO:0000250" key="1"/>
<evidence type="ECO:0000305" key="2"/>
<organism>
    <name type="scientific">Mycobacterium tuberculosis (strain ATCC 25618 / H37Rv)</name>
    <dbReference type="NCBI Taxonomy" id="83332"/>
    <lineage>
        <taxon>Bacteria</taxon>
        <taxon>Bacillati</taxon>
        <taxon>Actinomycetota</taxon>
        <taxon>Actinomycetes</taxon>
        <taxon>Mycobacteriales</taxon>
        <taxon>Mycobacteriaceae</taxon>
        <taxon>Mycobacterium</taxon>
        <taxon>Mycobacterium tuberculosis complex</taxon>
    </lineage>
</organism>
<reference key="1">
    <citation type="journal article" date="1998" name="Nature">
        <title>Deciphering the biology of Mycobacterium tuberculosis from the complete genome sequence.</title>
        <authorList>
            <person name="Cole S.T."/>
            <person name="Brosch R."/>
            <person name="Parkhill J."/>
            <person name="Garnier T."/>
            <person name="Churcher C.M."/>
            <person name="Harris D.E."/>
            <person name="Gordon S.V."/>
            <person name="Eiglmeier K."/>
            <person name="Gas S."/>
            <person name="Barry C.E. III"/>
            <person name="Tekaia F."/>
            <person name="Badcock K."/>
            <person name="Basham D."/>
            <person name="Brown D."/>
            <person name="Chillingworth T."/>
            <person name="Connor R."/>
            <person name="Davies R.M."/>
            <person name="Devlin K."/>
            <person name="Feltwell T."/>
            <person name="Gentles S."/>
            <person name="Hamlin N."/>
            <person name="Holroyd S."/>
            <person name="Hornsby T."/>
            <person name="Jagels K."/>
            <person name="Krogh A."/>
            <person name="McLean J."/>
            <person name="Moule S."/>
            <person name="Murphy L.D."/>
            <person name="Oliver S."/>
            <person name="Osborne J."/>
            <person name="Quail M.A."/>
            <person name="Rajandream M.A."/>
            <person name="Rogers J."/>
            <person name="Rutter S."/>
            <person name="Seeger K."/>
            <person name="Skelton S."/>
            <person name="Squares S."/>
            <person name="Squares R."/>
            <person name="Sulston J.E."/>
            <person name="Taylor K."/>
            <person name="Whitehead S."/>
            <person name="Barrell B.G."/>
        </authorList>
    </citation>
    <scope>NUCLEOTIDE SEQUENCE [LARGE SCALE GENOMIC DNA]</scope>
    <source>
        <strain>ATCC 25618 / H37Rv</strain>
    </source>
</reference>
<reference key="2">
    <citation type="journal article" date="2011" name="Mol. Cell. Proteomics">
        <title>Proteogenomic analysis of Mycobacterium tuberculosis by high resolution mass spectrometry.</title>
        <authorList>
            <person name="Kelkar D.S."/>
            <person name="Kumar D."/>
            <person name="Kumar P."/>
            <person name="Balakrishnan L."/>
            <person name="Muthusamy B."/>
            <person name="Yadav A.K."/>
            <person name="Shrivastava P."/>
            <person name="Marimuthu A."/>
            <person name="Anand S."/>
            <person name="Sundaram H."/>
            <person name="Kingsbury R."/>
            <person name="Harsha H.C."/>
            <person name="Nair B."/>
            <person name="Prasad T.S."/>
            <person name="Chauhan D.S."/>
            <person name="Katoch K."/>
            <person name="Katoch V.M."/>
            <person name="Kumar P."/>
            <person name="Chaerkady R."/>
            <person name="Ramachandran S."/>
            <person name="Dash D."/>
            <person name="Pandey A."/>
        </authorList>
    </citation>
    <scope>IDENTIFICATION BY MASS SPECTROMETRY [LARGE SCALE ANALYSIS]</scope>
    <source>
        <strain>ATCC 25618 / H37Rv</strain>
    </source>
</reference>
<protein>
    <recommendedName>
        <fullName>Arginine--tRNA ligase</fullName>
        <ecNumber>6.1.1.19</ecNumber>
    </recommendedName>
    <alternativeName>
        <fullName>Arginyl-tRNA synthetase</fullName>
        <shortName>ArgRS</shortName>
    </alternativeName>
</protein>
<sequence>MTPADLAELLKATAAAVLAERGLDASALPQMVTVERPRIPEHGDYASNLAMQLAKKVGTNPRELAGWLAEALTKVDGIASAEVAGPGFINMRLETAAQAKVVTSVIDAGHSYGHSLLLAGRKVNLEFVSANPTGPIHIGGTRWAAVGDALGRLLTTQGADVVREYYFNDHGAQIDRFANSLIAAAKGEPTPQDGYAGSYITNIAEQVLQKAPDALSLPDAELRETFRAIGVDLMFDHIKQSLHEFGTDFDVYTHEDSMHTGGRVENAIARLRETGNIYEKDGATWLRTSAFGDDKDRVVIKSDGKPAYIAGDLAYYLDKRQRGFDLCIYMLGADHHGYIARLKAAAAAFGDDPATVEVLIGQMVNLVRDGQPVRMSKRAGTVLTLDDLVEAIGVDAARYSLIRSSVDTAIDIDLALWSSASNENPVYYVQYAHARLSALARNAAELALIPDTNHLELLNHDKEGTLLRTLGEFPRVLETAASLREPHRVCRYLEDLAGDYHRFYDSCRVLPQGDEQPTDLHTARLALCQATRQVIANGLAIIGVTAPERM</sequence>
<feature type="chain" id="PRO_0000151580" description="Arginine--tRNA ligase">
    <location>
        <begin position="1"/>
        <end position="550"/>
    </location>
</feature>
<feature type="short sequence motif" description="'HIGH' region">
    <location>
        <begin position="130"/>
        <end position="140"/>
    </location>
</feature>
<keyword id="KW-0030">Aminoacyl-tRNA synthetase</keyword>
<keyword id="KW-0067">ATP-binding</keyword>
<keyword id="KW-0963">Cytoplasm</keyword>
<keyword id="KW-0436">Ligase</keyword>
<keyword id="KW-0547">Nucleotide-binding</keyword>
<keyword id="KW-0648">Protein biosynthesis</keyword>
<keyword id="KW-1185">Reference proteome</keyword>
<proteinExistence type="evidence at protein level"/>
<dbReference type="EC" id="6.1.1.19"/>
<dbReference type="EMBL" id="AL123456">
    <property type="protein sequence ID" value="CCP44049.1"/>
    <property type="molecule type" value="Genomic_DNA"/>
</dbReference>
<dbReference type="PIR" id="H70772">
    <property type="entry name" value="H70772"/>
</dbReference>
<dbReference type="RefSeq" id="NP_215808.1">
    <property type="nucleotide sequence ID" value="NC_000962.3"/>
</dbReference>
<dbReference type="RefSeq" id="WP_003406630.1">
    <property type="nucleotide sequence ID" value="NZ_NVQJ01000030.1"/>
</dbReference>
<dbReference type="SMR" id="P9WFW5"/>
<dbReference type="FunCoup" id="P9WFW5">
    <property type="interactions" value="456"/>
</dbReference>
<dbReference type="STRING" id="83332.Rv1292"/>
<dbReference type="PaxDb" id="83332-Rv1292"/>
<dbReference type="DNASU" id="886964"/>
<dbReference type="GeneID" id="886964"/>
<dbReference type="KEGG" id="mtu:Rv1292"/>
<dbReference type="KEGG" id="mtv:RVBD_1292"/>
<dbReference type="TubercuList" id="Rv1292"/>
<dbReference type="eggNOG" id="COG0018">
    <property type="taxonomic scope" value="Bacteria"/>
</dbReference>
<dbReference type="InParanoid" id="P9WFW5"/>
<dbReference type="OrthoDB" id="9803211at2"/>
<dbReference type="PhylomeDB" id="P9WFW5"/>
<dbReference type="Proteomes" id="UP000001584">
    <property type="component" value="Chromosome"/>
</dbReference>
<dbReference type="GO" id="GO:0005829">
    <property type="term" value="C:cytosol"/>
    <property type="evidence" value="ECO:0007005"/>
    <property type="project" value="MTBBASE"/>
</dbReference>
<dbReference type="GO" id="GO:0005886">
    <property type="term" value="C:plasma membrane"/>
    <property type="evidence" value="ECO:0007005"/>
    <property type="project" value="MTBBASE"/>
</dbReference>
<dbReference type="GO" id="GO:0004814">
    <property type="term" value="F:arginine-tRNA ligase activity"/>
    <property type="evidence" value="ECO:0000318"/>
    <property type="project" value="GO_Central"/>
</dbReference>
<dbReference type="GO" id="GO:0005524">
    <property type="term" value="F:ATP binding"/>
    <property type="evidence" value="ECO:0007669"/>
    <property type="project" value="UniProtKB-UniRule"/>
</dbReference>
<dbReference type="GO" id="GO:0006420">
    <property type="term" value="P:arginyl-tRNA aminoacylation"/>
    <property type="evidence" value="ECO:0000318"/>
    <property type="project" value="GO_Central"/>
</dbReference>
<dbReference type="CDD" id="cd07956">
    <property type="entry name" value="Anticodon_Ia_Arg"/>
    <property type="match status" value="1"/>
</dbReference>
<dbReference type="CDD" id="cd00671">
    <property type="entry name" value="ArgRS_core"/>
    <property type="match status" value="1"/>
</dbReference>
<dbReference type="FunFam" id="1.10.730.10:FF:000008">
    <property type="entry name" value="Arginine--tRNA ligase"/>
    <property type="match status" value="1"/>
</dbReference>
<dbReference type="FunFam" id="3.30.1360.70:FF:000003">
    <property type="entry name" value="Arginine--tRNA ligase"/>
    <property type="match status" value="1"/>
</dbReference>
<dbReference type="FunFam" id="3.40.50.620:FF:000062">
    <property type="entry name" value="Arginine--tRNA ligase"/>
    <property type="match status" value="1"/>
</dbReference>
<dbReference type="Gene3D" id="3.30.1360.70">
    <property type="entry name" value="Arginyl tRNA synthetase N-terminal domain"/>
    <property type="match status" value="1"/>
</dbReference>
<dbReference type="Gene3D" id="3.40.50.620">
    <property type="entry name" value="HUPs"/>
    <property type="match status" value="1"/>
</dbReference>
<dbReference type="Gene3D" id="1.10.730.10">
    <property type="entry name" value="Isoleucyl-tRNA Synthetase, Domain 1"/>
    <property type="match status" value="1"/>
</dbReference>
<dbReference type="HAMAP" id="MF_00123">
    <property type="entry name" value="Arg_tRNA_synth"/>
    <property type="match status" value="1"/>
</dbReference>
<dbReference type="InterPro" id="IPR001412">
    <property type="entry name" value="aa-tRNA-synth_I_CS"/>
</dbReference>
<dbReference type="InterPro" id="IPR001278">
    <property type="entry name" value="Arg-tRNA-ligase"/>
</dbReference>
<dbReference type="InterPro" id="IPR005148">
    <property type="entry name" value="Arg-tRNA-synth_N"/>
</dbReference>
<dbReference type="InterPro" id="IPR036695">
    <property type="entry name" value="Arg-tRNA-synth_N_sf"/>
</dbReference>
<dbReference type="InterPro" id="IPR035684">
    <property type="entry name" value="ArgRS_core"/>
</dbReference>
<dbReference type="InterPro" id="IPR008909">
    <property type="entry name" value="DALR_anticod-bd"/>
</dbReference>
<dbReference type="InterPro" id="IPR014729">
    <property type="entry name" value="Rossmann-like_a/b/a_fold"/>
</dbReference>
<dbReference type="InterPro" id="IPR009080">
    <property type="entry name" value="tRNAsynth_Ia_anticodon-bd"/>
</dbReference>
<dbReference type="NCBIfam" id="TIGR00456">
    <property type="entry name" value="argS"/>
    <property type="match status" value="1"/>
</dbReference>
<dbReference type="PANTHER" id="PTHR11956:SF5">
    <property type="entry name" value="ARGININE--TRNA LIGASE, CYTOPLASMIC"/>
    <property type="match status" value="1"/>
</dbReference>
<dbReference type="PANTHER" id="PTHR11956">
    <property type="entry name" value="ARGINYL-TRNA SYNTHETASE"/>
    <property type="match status" value="1"/>
</dbReference>
<dbReference type="Pfam" id="PF03485">
    <property type="entry name" value="Arg_tRNA_synt_N"/>
    <property type="match status" value="1"/>
</dbReference>
<dbReference type="Pfam" id="PF05746">
    <property type="entry name" value="DALR_1"/>
    <property type="match status" value="1"/>
</dbReference>
<dbReference type="Pfam" id="PF00750">
    <property type="entry name" value="tRNA-synt_1d"/>
    <property type="match status" value="1"/>
</dbReference>
<dbReference type="PRINTS" id="PR01038">
    <property type="entry name" value="TRNASYNTHARG"/>
</dbReference>
<dbReference type="SMART" id="SM01016">
    <property type="entry name" value="Arg_tRNA_synt_N"/>
    <property type="match status" value="1"/>
</dbReference>
<dbReference type="SMART" id="SM00836">
    <property type="entry name" value="DALR_1"/>
    <property type="match status" value="1"/>
</dbReference>
<dbReference type="SUPFAM" id="SSF47323">
    <property type="entry name" value="Anticodon-binding domain of a subclass of class I aminoacyl-tRNA synthetases"/>
    <property type="match status" value="1"/>
</dbReference>
<dbReference type="SUPFAM" id="SSF55190">
    <property type="entry name" value="Arginyl-tRNA synthetase (ArgRS), N-terminal 'additional' domain"/>
    <property type="match status" value="1"/>
</dbReference>
<dbReference type="SUPFAM" id="SSF52374">
    <property type="entry name" value="Nucleotidylyl transferase"/>
    <property type="match status" value="1"/>
</dbReference>
<dbReference type="PROSITE" id="PS00178">
    <property type="entry name" value="AA_TRNA_LIGASE_I"/>
    <property type="match status" value="1"/>
</dbReference>
<comment type="catalytic activity">
    <reaction>
        <text>tRNA(Arg) + L-arginine + ATP = L-arginyl-tRNA(Arg) + AMP + diphosphate</text>
        <dbReference type="Rhea" id="RHEA:20301"/>
        <dbReference type="Rhea" id="RHEA-COMP:9658"/>
        <dbReference type="Rhea" id="RHEA-COMP:9673"/>
        <dbReference type="ChEBI" id="CHEBI:30616"/>
        <dbReference type="ChEBI" id="CHEBI:32682"/>
        <dbReference type="ChEBI" id="CHEBI:33019"/>
        <dbReference type="ChEBI" id="CHEBI:78442"/>
        <dbReference type="ChEBI" id="CHEBI:78513"/>
        <dbReference type="ChEBI" id="CHEBI:456215"/>
        <dbReference type="EC" id="6.1.1.19"/>
    </reaction>
</comment>
<comment type="subunit">
    <text evidence="1">Monomer.</text>
</comment>
<comment type="subcellular location">
    <subcellularLocation>
        <location evidence="1">Cytoplasm</location>
    </subcellularLocation>
</comment>
<comment type="similarity">
    <text evidence="2">Belongs to the class-I aminoacyl-tRNA synthetase family.</text>
</comment>
<accession>P9WFW5</accession>
<accession>L0T8Y6</accession>
<accession>P67569</accession>
<accession>Q10609</accession>
<name>SYR_MYCTU</name>